<comment type="function">
    <text evidence="1">Involved in the aerobic and anaerobic degradation of long-chain fatty acids via beta-oxidation cycle. Catalyzes the formation of 3-oxoacyl-CoA from enoyl-CoA via L-3-hydroxyacyl-CoA. It can also use D-3-hydroxyacyl-CoA and cis-3-enoyl-CoA as substrate.</text>
</comment>
<comment type="catalytic activity">
    <reaction evidence="1">
        <text>a (3S)-3-hydroxyacyl-CoA + NAD(+) = a 3-oxoacyl-CoA + NADH + H(+)</text>
        <dbReference type="Rhea" id="RHEA:22432"/>
        <dbReference type="ChEBI" id="CHEBI:15378"/>
        <dbReference type="ChEBI" id="CHEBI:57318"/>
        <dbReference type="ChEBI" id="CHEBI:57540"/>
        <dbReference type="ChEBI" id="CHEBI:57945"/>
        <dbReference type="ChEBI" id="CHEBI:90726"/>
        <dbReference type="EC" id="1.1.1.35"/>
    </reaction>
</comment>
<comment type="catalytic activity">
    <reaction evidence="1">
        <text>a (3S)-3-hydroxyacyl-CoA = a (2E)-enoyl-CoA + H2O</text>
        <dbReference type="Rhea" id="RHEA:16105"/>
        <dbReference type="ChEBI" id="CHEBI:15377"/>
        <dbReference type="ChEBI" id="CHEBI:57318"/>
        <dbReference type="ChEBI" id="CHEBI:58856"/>
        <dbReference type="EC" id="4.2.1.17"/>
    </reaction>
</comment>
<comment type="catalytic activity">
    <reaction evidence="1">
        <text>a 4-saturated-(3S)-3-hydroxyacyl-CoA = a (3E)-enoyl-CoA + H2O</text>
        <dbReference type="Rhea" id="RHEA:20724"/>
        <dbReference type="ChEBI" id="CHEBI:15377"/>
        <dbReference type="ChEBI" id="CHEBI:58521"/>
        <dbReference type="ChEBI" id="CHEBI:137480"/>
        <dbReference type="EC" id="4.2.1.17"/>
    </reaction>
</comment>
<comment type="catalytic activity">
    <reaction evidence="1">
        <text>(3S)-3-hydroxybutanoyl-CoA = (3R)-3-hydroxybutanoyl-CoA</text>
        <dbReference type="Rhea" id="RHEA:21760"/>
        <dbReference type="ChEBI" id="CHEBI:57315"/>
        <dbReference type="ChEBI" id="CHEBI:57316"/>
        <dbReference type="EC" id="5.1.2.3"/>
    </reaction>
</comment>
<comment type="catalytic activity">
    <reaction evidence="1">
        <text>a (3Z)-enoyl-CoA = a 4-saturated (2E)-enoyl-CoA</text>
        <dbReference type="Rhea" id="RHEA:45900"/>
        <dbReference type="ChEBI" id="CHEBI:85097"/>
        <dbReference type="ChEBI" id="CHEBI:85489"/>
        <dbReference type="EC" id="5.3.3.8"/>
    </reaction>
</comment>
<comment type="catalytic activity">
    <reaction evidence="1">
        <text>a (3E)-enoyl-CoA = a 4-saturated (2E)-enoyl-CoA</text>
        <dbReference type="Rhea" id="RHEA:45228"/>
        <dbReference type="ChEBI" id="CHEBI:58521"/>
        <dbReference type="ChEBI" id="CHEBI:85097"/>
        <dbReference type="EC" id="5.3.3.8"/>
    </reaction>
</comment>
<comment type="pathway">
    <text evidence="1">Lipid metabolism; fatty acid beta-oxidation.</text>
</comment>
<comment type="subunit">
    <text evidence="1">Heterotetramer of two alpha chains (FadB) and two beta chains (FadA).</text>
</comment>
<comment type="similarity">
    <text evidence="1">In the N-terminal section; belongs to the enoyl-CoA hydratase/isomerase family.</text>
</comment>
<comment type="similarity">
    <text evidence="1">In the C-terminal section; belongs to the 3-hydroxyacyl-CoA dehydrogenase family.</text>
</comment>
<proteinExistence type="inferred from homology"/>
<accession>A0KR50</accession>
<keyword id="KW-0276">Fatty acid metabolism</keyword>
<keyword id="KW-0413">Isomerase</keyword>
<keyword id="KW-0442">Lipid degradation</keyword>
<keyword id="KW-0443">Lipid metabolism</keyword>
<keyword id="KW-0456">Lyase</keyword>
<keyword id="KW-0511">Multifunctional enzyme</keyword>
<keyword id="KW-0520">NAD</keyword>
<keyword id="KW-0560">Oxidoreductase</keyword>
<name>FADB_SHESA</name>
<organism>
    <name type="scientific">Shewanella sp. (strain ANA-3)</name>
    <dbReference type="NCBI Taxonomy" id="94122"/>
    <lineage>
        <taxon>Bacteria</taxon>
        <taxon>Pseudomonadati</taxon>
        <taxon>Pseudomonadota</taxon>
        <taxon>Gammaproteobacteria</taxon>
        <taxon>Alteromonadales</taxon>
        <taxon>Shewanellaceae</taxon>
        <taxon>Shewanella</taxon>
    </lineage>
</organism>
<gene>
    <name evidence="1" type="primary">fadB</name>
    <name type="ordered locus">Shewana3_0024</name>
</gene>
<reference key="1">
    <citation type="submission" date="2006-09" db="EMBL/GenBank/DDBJ databases">
        <title>Complete sequence of chromosome 1 of Shewanella sp. ANA-3.</title>
        <authorList>
            <person name="Copeland A."/>
            <person name="Lucas S."/>
            <person name="Lapidus A."/>
            <person name="Barry K."/>
            <person name="Detter J.C."/>
            <person name="Glavina del Rio T."/>
            <person name="Hammon N."/>
            <person name="Israni S."/>
            <person name="Dalin E."/>
            <person name="Tice H."/>
            <person name="Pitluck S."/>
            <person name="Chertkov O."/>
            <person name="Brettin T."/>
            <person name="Bruce D."/>
            <person name="Han C."/>
            <person name="Tapia R."/>
            <person name="Gilna P."/>
            <person name="Schmutz J."/>
            <person name="Larimer F."/>
            <person name="Land M."/>
            <person name="Hauser L."/>
            <person name="Kyrpides N."/>
            <person name="Kim E."/>
            <person name="Newman D."/>
            <person name="Salticov C."/>
            <person name="Konstantinidis K."/>
            <person name="Klappenback J."/>
            <person name="Tiedje J."/>
            <person name="Richardson P."/>
        </authorList>
    </citation>
    <scope>NUCLEOTIDE SEQUENCE [LARGE SCALE GENOMIC DNA]</scope>
    <source>
        <strain>ANA-3</strain>
    </source>
</reference>
<feature type="chain" id="PRO_1000069578" description="Fatty acid oxidation complex subunit alpha">
    <location>
        <begin position="1"/>
        <end position="716"/>
    </location>
</feature>
<feature type="region of interest" description="Enoyl-CoA hydratase/isomerase" evidence="1">
    <location>
        <begin position="1"/>
        <end position="189"/>
    </location>
</feature>
<feature type="region of interest" description="3-hydroxyacyl-CoA dehydrogenase" evidence="1">
    <location>
        <begin position="311"/>
        <end position="716"/>
    </location>
</feature>
<feature type="active site" description="For 3-hydroxyacyl-CoA dehydrogenase activity" evidence="1">
    <location>
        <position position="450"/>
    </location>
</feature>
<feature type="binding site" evidence="1">
    <location>
        <position position="296"/>
    </location>
    <ligand>
        <name>substrate</name>
    </ligand>
</feature>
<feature type="binding site" evidence="1">
    <location>
        <position position="324"/>
    </location>
    <ligand>
        <name>NAD(+)</name>
        <dbReference type="ChEBI" id="CHEBI:57540"/>
    </ligand>
</feature>
<feature type="binding site" evidence="1">
    <location>
        <position position="343"/>
    </location>
    <ligand>
        <name>NAD(+)</name>
        <dbReference type="ChEBI" id="CHEBI:57540"/>
    </ligand>
</feature>
<feature type="binding site" evidence="1">
    <location>
        <begin position="400"/>
        <end position="402"/>
    </location>
    <ligand>
        <name>NAD(+)</name>
        <dbReference type="ChEBI" id="CHEBI:57540"/>
    </ligand>
</feature>
<feature type="binding site" evidence="1">
    <location>
        <position position="407"/>
    </location>
    <ligand>
        <name>NAD(+)</name>
        <dbReference type="ChEBI" id="CHEBI:57540"/>
    </ligand>
</feature>
<feature type="binding site" evidence="1">
    <location>
        <position position="429"/>
    </location>
    <ligand>
        <name>NAD(+)</name>
        <dbReference type="ChEBI" id="CHEBI:57540"/>
    </ligand>
</feature>
<feature type="binding site" evidence="1">
    <location>
        <position position="453"/>
    </location>
    <ligand>
        <name>NAD(+)</name>
        <dbReference type="ChEBI" id="CHEBI:57540"/>
    </ligand>
</feature>
<feature type="binding site" evidence="1">
    <location>
        <position position="500"/>
    </location>
    <ligand>
        <name>substrate</name>
    </ligand>
</feature>
<feature type="binding site" evidence="1">
    <location>
        <position position="660"/>
    </location>
    <ligand>
        <name>substrate</name>
    </ligand>
</feature>
<feature type="site" description="Important for catalytic activity" evidence="1">
    <location>
        <position position="119"/>
    </location>
</feature>
<feature type="site" description="Important for catalytic activity" evidence="1">
    <location>
        <position position="139"/>
    </location>
</feature>
<dbReference type="EC" id="4.2.1.17" evidence="1"/>
<dbReference type="EC" id="5.1.2.3" evidence="1"/>
<dbReference type="EC" id="5.3.3.8" evidence="1"/>
<dbReference type="EC" id="1.1.1.35" evidence="1"/>
<dbReference type="EMBL" id="CP000469">
    <property type="protein sequence ID" value="ABK46269.1"/>
    <property type="molecule type" value="Genomic_DNA"/>
</dbReference>
<dbReference type="RefSeq" id="WP_011715317.1">
    <property type="nucleotide sequence ID" value="NC_008577.1"/>
</dbReference>
<dbReference type="SMR" id="A0KR50"/>
<dbReference type="STRING" id="94122.Shewana3_0024"/>
<dbReference type="KEGG" id="shn:Shewana3_0024"/>
<dbReference type="eggNOG" id="COG1024">
    <property type="taxonomic scope" value="Bacteria"/>
</dbReference>
<dbReference type="eggNOG" id="COG1250">
    <property type="taxonomic scope" value="Bacteria"/>
</dbReference>
<dbReference type="HOGENOM" id="CLU_009834_16_3_6"/>
<dbReference type="OrthoDB" id="5389341at2"/>
<dbReference type="UniPathway" id="UPA00659"/>
<dbReference type="Proteomes" id="UP000002589">
    <property type="component" value="Chromosome"/>
</dbReference>
<dbReference type="GO" id="GO:0036125">
    <property type="term" value="C:fatty acid beta-oxidation multienzyme complex"/>
    <property type="evidence" value="ECO:0007669"/>
    <property type="project" value="InterPro"/>
</dbReference>
<dbReference type="GO" id="GO:0008692">
    <property type="term" value="F:3-hydroxybutyryl-CoA epimerase activity"/>
    <property type="evidence" value="ECO:0007669"/>
    <property type="project" value="UniProtKB-UniRule"/>
</dbReference>
<dbReference type="GO" id="GO:0004165">
    <property type="term" value="F:delta(3)-delta(2)-enoyl-CoA isomerase activity"/>
    <property type="evidence" value="ECO:0007669"/>
    <property type="project" value="UniProtKB-UniRule"/>
</dbReference>
<dbReference type="GO" id="GO:0004300">
    <property type="term" value="F:enoyl-CoA hydratase activity"/>
    <property type="evidence" value="ECO:0007669"/>
    <property type="project" value="UniProtKB-UniRule"/>
</dbReference>
<dbReference type="GO" id="GO:0016509">
    <property type="term" value="F:long-chain-3-hydroxyacyl-CoA dehydrogenase activity"/>
    <property type="evidence" value="ECO:0007669"/>
    <property type="project" value="TreeGrafter"/>
</dbReference>
<dbReference type="GO" id="GO:0070403">
    <property type="term" value="F:NAD+ binding"/>
    <property type="evidence" value="ECO:0007669"/>
    <property type="project" value="InterPro"/>
</dbReference>
<dbReference type="GO" id="GO:0006635">
    <property type="term" value="P:fatty acid beta-oxidation"/>
    <property type="evidence" value="ECO:0007669"/>
    <property type="project" value="UniProtKB-UniRule"/>
</dbReference>
<dbReference type="CDD" id="cd06558">
    <property type="entry name" value="crotonase-like"/>
    <property type="match status" value="1"/>
</dbReference>
<dbReference type="FunFam" id="1.10.1040.50:FF:000001">
    <property type="entry name" value="Fatty acid oxidation complex subunit alpha"/>
    <property type="match status" value="1"/>
</dbReference>
<dbReference type="FunFam" id="3.90.226.10:FF:000018">
    <property type="entry name" value="Fatty acid oxidation complex subunit alpha"/>
    <property type="match status" value="1"/>
</dbReference>
<dbReference type="FunFam" id="3.40.50.720:FF:000009">
    <property type="entry name" value="Fatty oxidation complex, alpha subunit"/>
    <property type="match status" value="1"/>
</dbReference>
<dbReference type="Gene3D" id="1.10.1040.50">
    <property type="match status" value="1"/>
</dbReference>
<dbReference type="Gene3D" id="3.90.226.10">
    <property type="entry name" value="2-enoyl-CoA Hydratase, Chain A, domain 1"/>
    <property type="match status" value="1"/>
</dbReference>
<dbReference type="Gene3D" id="3.40.50.720">
    <property type="entry name" value="NAD(P)-binding Rossmann-like Domain"/>
    <property type="match status" value="1"/>
</dbReference>
<dbReference type="HAMAP" id="MF_01621">
    <property type="entry name" value="FadB"/>
    <property type="match status" value="1"/>
</dbReference>
<dbReference type="InterPro" id="IPR006180">
    <property type="entry name" value="3-OHacyl-CoA_DH_CS"/>
</dbReference>
<dbReference type="InterPro" id="IPR006176">
    <property type="entry name" value="3-OHacyl-CoA_DH_NAD-bd"/>
</dbReference>
<dbReference type="InterPro" id="IPR006108">
    <property type="entry name" value="3HC_DH_C"/>
</dbReference>
<dbReference type="InterPro" id="IPR008927">
    <property type="entry name" value="6-PGluconate_DH-like_C_sf"/>
</dbReference>
<dbReference type="InterPro" id="IPR029045">
    <property type="entry name" value="ClpP/crotonase-like_dom_sf"/>
</dbReference>
<dbReference type="InterPro" id="IPR001753">
    <property type="entry name" value="Enoyl-CoA_hydra/iso"/>
</dbReference>
<dbReference type="InterPro" id="IPR050136">
    <property type="entry name" value="FA_oxidation_alpha_subunit"/>
</dbReference>
<dbReference type="InterPro" id="IPR012799">
    <property type="entry name" value="FadB"/>
</dbReference>
<dbReference type="InterPro" id="IPR036291">
    <property type="entry name" value="NAD(P)-bd_dom_sf"/>
</dbReference>
<dbReference type="NCBIfam" id="TIGR02437">
    <property type="entry name" value="FadB"/>
    <property type="match status" value="1"/>
</dbReference>
<dbReference type="NCBIfam" id="NF008727">
    <property type="entry name" value="PRK11730.1"/>
    <property type="match status" value="1"/>
</dbReference>
<dbReference type="PANTHER" id="PTHR43612">
    <property type="entry name" value="TRIFUNCTIONAL ENZYME SUBUNIT ALPHA"/>
    <property type="match status" value="1"/>
</dbReference>
<dbReference type="PANTHER" id="PTHR43612:SF3">
    <property type="entry name" value="TRIFUNCTIONAL ENZYME SUBUNIT ALPHA, MITOCHONDRIAL"/>
    <property type="match status" value="1"/>
</dbReference>
<dbReference type="Pfam" id="PF00725">
    <property type="entry name" value="3HCDH"/>
    <property type="match status" value="1"/>
</dbReference>
<dbReference type="Pfam" id="PF02737">
    <property type="entry name" value="3HCDH_N"/>
    <property type="match status" value="1"/>
</dbReference>
<dbReference type="Pfam" id="PF00378">
    <property type="entry name" value="ECH_1"/>
    <property type="match status" value="1"/>
</dbReference>
<dbReference type="SUPFAM" id="SSF48179">
    <property type="entry name" value="6-phosphogluconate dehydrogenase C-terminal domain-like"/>
    <property type="match status" value="2"/>
</dbReference>
<dbReference type="SUPFAM" id="SSF52096">
    <property type="entry name" value="ClpP/crotonase"/>
    <property type="match status" value="1"/>
</dbReference>
<dbReference type="SUPFAM" id="SSF51735">
    <property type="entry name" value="NAD(P)-binding Rossmann-fold domains"/>
    <property type="match status" value="1"/>
</dbReference>
<dbReference type="PROSITE" id="PS00067">
    <property type="entry name" value="3HCDH"/>
    <property type="match status" value="1"/>
</dbReference>
<evidence type="ECO:0000255" key="1">
    <source>
        <dbReference type="HAMAP-Rule" id="MF_01621"/>
    </source>
</evidence>
<protein>
    <recommendedName>
        <fullName evidence="1">Fatty acid oxidation complex subunit alpha</fullName>
    </recommendedName>
    <domain>
        <recommendedName>
            <fullName evidence="1">Enoyl-CoA hydratase/Delta(3)-cis-Delta(2)-trans-enoyl-CoA isomerase/3-hydroxybutyryl-CoA epimerase</fullName>
            <ecNumber evidence="1">4.2.1.17</ecNumber>
            <ecNumber evidence="1">5.1.2.3</ecNumber>
            <ecNumber evidence="1">5.3.3.8</ecNumber>
        </recommendedName>
    </domain>
    <domain>
        <recommendedName>
            <fullName evidence="1">3-hydroxyacyl-CoA dehydrogenase</fullName>
            <ecNumber evidence="1">1.1.1.35</ecNumber>
        </recommendedName>
    </domain>
</protein>
<sequence length="716" mass="76660">MIYQSPTIQVELLEDNIAKLCFNAPGSVNKFDRETLASLDAALDSIKQQSNIQALVLTSGKDTFIVGADITEFLGLFAQDDAVLLSWIEQANAVFNKLEDLPFPTASAIKGFALGGGCETILATDFRIADTTAKIGLPETKLGIIPGFGGTVRLPRVIGADNALEWITTGKDQRPEDALKVGAVDAVVAPEALEAAAIQMLKDAVAEKLDWQARRQRKMSPLTLPKLEAMMSFTTAKGMVFAVAGKHYPAPMAAVSVVEQAATKGRSDALQIEHQAFIKLAKTDVAKALIGIFLNDQLVKGKAKKAGKLAKDVKSAAVLGAGIMGGGIAYQSASKGTPIVMKDIAQPALDLGLGEAAKLLSAQVARGRSTPEKMAKVLNNITPALDYAPVKHADVVVEAVVEHPKVKAQVLAEVEQYVSEDAIIASNTSTISINLLAKSMKKPERFCGMHFFNPVHKMPLVEVIRGEHSSEETIASVVAYASKMGKTPIVVNDCPGFFVNRVLFPYFAGFNGLLAEGGDFAAIDKVMEKQFGWPMGPAYLLDVVGLDTGHHAQAVMAEGFPDRMGKSGNDAIDVMFENKRLGQKNGKGFYAYSVDSRGKPKKDVDPTSYELLKAAFGEQKAFDADEIIARTMIPMIIETVRCLEEGIVASPAEADMGLVYGLGFPPFRGGVFRYLDTMGVANFVALADKYAHLGGLYQVTDAMRALAANNGSYYQA</sequence>